<dbReference type="EC" id="1.2.1.72" evidence="1"/>
<dbReference type="EMBL" id="CP000302">
    <property type="protein sequence ID" value="ABE54372.1"/>
    <property type="status" value="ALT_INIT"/>
    <property type="molecule type" value="Genomic_DNA"/>
</dbReference>
<dbReference type="RefSeq" id="WP_011495534.1">
    <property type="nucleotide sequence ID" value="NC_007954.1"/>
</dbReference>
<dbReference type="SMR" id="Q12QA4"/>
<dbReference type="STRING" id="318161.Sden_1084"/>
<dbReference type="KEGG" id="sdn:Sden_1084"/>
<dbReference type="eggNOG" id="COG0057">
    <property type="taxonomic scope" value="Bacteria"/>
</dbReference>
<dbReference type="HOGENOM" id="CLU_030140_0_0_6"/>
<dbReference type="OrthoDB" id="9803304at2"/>
<dbReference type="UniPathway" id="UPA00244">
    <property type="reaction ID" value="UER00309"/>
</dbReference>
<dbReference type="Proteomes" id="UP000001982">
    <property type="component" value="Chromosome"/>
</dbReference>
<dbReference type="GO" id="GO:0005737">
    <property type="term" value="C:cytoplasm"/>
    <property type="evidence" value="ECO:0007669"/>
    <property type="project" value="UniProtKB-SubCell"/>
</dbReference>
<dbReference type="GO" id="GO:0048001">
    <property type="term" value="F:erythrose-4-phosphate dehydrogenase activity"/>
    <property type="evidence" value="ECO:0007669"/>
    <property type="project" value="UniProtKB-UniRule"/>
</dbReference>
<dbReference type="GO" id="GO:0051287">
    <property type="term" value="F:NAD binding"/>
    <property type="evidence" value="ECO:0007669"/>
    <property type="project" value="InterPro"/>
</dbReference>
<dbReference type="GO" id="GO:0042823">
    <property type="term" value="P:pyridoxal phosphate biosynthetic process"/>
    <property type="evidence" value="ECO:0007669"/>
    <property type="project" value="UniProtKB-UniRule"/>
</dbReference>
<dbReference type="GO" id="GO:0008615">
    <property type="term" value="P:pyridoxine biosynthetic process"/>
    <property type="evidence" value="ECO:0007669"/>
    <property type="project" value="UniProtKB-UniRule"/>
</dbReference>
<dbReference type="CDD" id="cd23937">
    <property type="entry name" value="GAPDH_C_E4PDH"/>
    <property type="match status" value="1"/>
</dbReference>
<dbReference type="CDD" id="cd17892">
    <property type="entry name" value="GAPDH_N_E4PDH"/>
    <property type="match status" value="1"/>
</dbReference>
<dbReference type="FunFam" id="3.30.360.10:FF:000007">
    <property type="entry name" value="D-erythrose-4-phosphate dehydrogenase"/>
    <property type="match status" value="1"/>
</dbReference>
<dbReference type="FunFam" id="3.40.50.720:FF:000001">
    <property type="entry name" value="Glyceraldehyde-3-phosphate dehydrogenase"/>
    <property type="match status" value="1"/>
</dbReference>
<dbReference type="Gene3D" id="3.30.360.10">
    <property type="entry name" value="Dihydrodipicolinate Reductase, domain 2"/>
    <property type="match status" value="1"/>
</dbReference>
<dbReference type="Gene3D" id="3.40.50.720">
    <property type="entry name" value="NAD(P)-binding Rossmann-like Domain"/>
    <property type="match status" value="1"/>
</dbReference>
<dbReference type="HAMAP" id="MF_01640">
    <property type="entry name" value="E4P_dehydrog"/>
    <property type="match status" value="1"/>
</dbReference>
<dbReference type="InterPro" id="IPR006422">
    <property type="entry name" value="E4P_DH_bac"/>
</dbReference>
<dbReference type="InterPro" id="IPR020831">
    <property type="entry name" value="GlycerAld/Erythrose_P_DH"/>
</dbReference>
<dbReference type="InterPro" id="IPR020830">
    <property type="entry name" value="GlycerAld_3-P_DH_AS"/>
</dbReference>
<dbReference type="InterPro" id="IPR020829">
    <property type="entry name" value="GlycerAld_3-P_DH_cat"/>
</dbReference>
<dbReference type="InterPro" id="IPR020828">
    <property type="entry name" value="GlycerAld_3-P_DH_NAD(P)-bd"/>
</dbReference>
<dbReference type="InterPro" id="IPR036291">
    <property type="entry name" value="NAD(P)-bd_dom_sf"/>
</dbReference>
<dbReference type="NCBIfam" id="NF010058">
    <property type="entry name" value="PRK13535.1"/>
    <property type="match status" value="1"/>
</dbReference>
<dbReference type="PANTHER" id="PTHR43148">
    <property type="entry name" value="GLYCERALDEHYDE-3-PHOSPHATE DEHYDROGENASE 2"/>
    <property type="match status" value="1"/>
</dbReference>
<dbReference type="Pfam" id="PF02800">
    <property type="entry name" value="Gp_dh_C"/>
    <property type="match status" value="1"/>
</dbReference>
<dbReference type="Pfam" id="PF00044">
    <property type="entry name" value="Gp_dh_N"/>
    <property type="match status" value="1"/>
</dbReference>
<dbReference type="PIRSF" id="PIRSF000149">
    <property type="entry name" value="GAP_DH"/>
    <property type="match status" value="1"/>
</dbReference>
<dbReference type="PRINTS" id="PR00078">
    <property type="entry name" value="G3PDHDRGNASE"/>
</dbReference>
<dbReference type="SMART" id="SM00846">
    <property type="entry name" value="Gp_dh_N"/>
    <property type="match status" value="1"/>
</dbReference>
<dbReference type="SUPFAM" id="SSF55347">
    <property type="entry name" value="Glyceraldehyde-3-phosphate dehydrogenase-like, C-terminal domain"/>
    <property type="match status" value="1"/>
</dbReference>
<dbReference type="SUPFAM" id="SSF51735">
    <property type="entry name" value="NAD(P)-binding Rossmann-fold domains"/>
    <property type="match status" value="1"/>
</dbReference>
<dbReference type="PROSITE" id="PS00071">
    <property type="entry name" value="GAPDH"/>
    <property type="match status" value="1"/>
</dbReference>
<evidence type="ECO:0000255" key="1">
    <source>
        <dbReference type="HAMAP-Rule" id="MF_01640"/>
    </source>
</evidence>
<evidence type="ECO:0000305" key="2"/>
<name>E4PD_SHEDO</name>
<keyword id="KW-0963">Cytoplasm</keyword>
<keyword id="KW-0520">NAD</keyword>
<keyword id="KW-0560">Oxidoreductase</keyword>
<keyword id="KW-0664">Pyridoxine biosynthesis</keyword>
<keyword id="KW-1185">Reference proteome</keyword>
<reference key="1">
    <citation type="submission" date="2006-03" db="EMBL/GenBank/DDBJ databases">
        <title>Complete sequence of Shewanella denitrificans OS217.</title>
        <authorList>
            <consortium name="US DOE Joint Genome Institute"/>
            <person name="Copeland A."/>
            <person name="Lucas S."/>
            <person name="Lapidus A."/>
            <person name="Barry K."/>
            <person name="Detter J.C."/>
            <person name="Glavina del Rio T."/>
            <person name="Hammon N."/>
            <person name="Israni S."/>
            <person name="Dalin E."/>
            <person name="Tice H."/>
            <person name="Pitluck S."/>
            <person name="Brettin T."/>
            <person name="Bruce D."/>
            <person name="Han C."/>
            <person name="Tapia R."/>
            <person name="Gilna P."/>
            <person name="Kiss H."/>
            <person name="Schmutz J."/>
            <person name="Larimer F."/>
            <person name="Land M."/>
            <person name="Hauser L."/>
            <person name="Kyrpides N."/>
            <person name="Lykidis A."/>
            <person name="Richardson P."/>
        </authorList>
    </citation>
    <scope>NUCLEOTIDE SEQUENCE [LARGE SCALE GENOMIC DNA]</scope>
    <source>
        <strain>OS217 / ATCC BAA-1090 / DSM 15013</strain>
    </source>
</reference>
<protein>
    <recommendedName>
        <fullName evidence="1">D-erythrose-4-phosphate dehydrogenase</fullName>
        <shortName evidence="1">E4PDH</shortName>
        <ecNumber evidence="1">1.2.1.72</ecNumber>
    </recommendedName>
</protein>
<gene>
    <name evidence="1" type="primary">epd</name>
    <name type="ordered locus">Sden_1084</name>
</gene>
<proteinExistence type="inferred from homology"/>
<organism>
    <name type="scientific">Shewanella denitrificans (strain OS217 / ATCC BAA-1090 / DSM 15013)</name>
    <dbReference type="NCBI Taxonomy" id="318161"/>
    <lineage>
        <taxon>Bacteria</taxon>
        <taxon>Pseudomonadati</taxon>
        <taxon>Pseudomonadota</taxon>
        <taxon>Gammaproteobacteria</taxon>
        <taxon>Alteromonadales</taxon>
        <taxon>Shewanellaceae</taxon>
        <taxon>Shewanella</taxon>
    </lineage>
</organism>
<accession>Q12QA4</accession>
<sequence length="342" mass="37587">MIRVAINGYGRIGRSILRALYESGKRQQIQIVAINELAKPEAIRHLTQYDTTHGRFGQTVELQEGKLHIGDDAIALFHQSDATKLPWGELDIDIVFEASGSLIEREACEAHIISGAKQVLISHPSSQDVDATIVYGVNHHLLAAEHTVVSNASCTTNCIVPVIDVLDSHFGVISGAITTIHSAMNDQQVIDAYHDDLRRTRAAGQSIIPVDTKLARGIERILPKMKDKFEAISVRVPTINVTAIDVSVTLRDRVDISIINSVLQQAAKGRFDGILGYTDEPLVSCDFNHDPRSSIVDATQTRVSDGHLVKLLLWCDNEWGFANRMLDTSLAMIRAKSAKSVK</sequence>
<comment type="function">
    <text evidence="1">Catalyzes the NAD-dependent conversion of D-erythrose 4-phosphate to 4-phosphoerythronate.</text>
</comment>
<comment type="catalytic activity">
    <reaction evidence="1">
        <text>D-erythrose 4-phosphate + NAD(+) + H2O = 4-phospho-D-erythronate + NADH + 2 H(+)</text>
        <dbReference type="Rhea" id="RHEA:12056"/>
        <dbReference type="ChEBI" id="CHEBI:15377"/>
        <dbReference type="ChEBI" id="CHEBI:15378"/>
        <dbReference type="ChEBI" id="CHEBI:16897"/>
        <dbReference type="ChEBI" id="CHEBI:57540"/>
        <dbReference type="ChEBI" id="CHEBI:57945"/>
        <dbReference type="ChEBI" id="CHEBI:58766"/>
        <dbReference type="EC" id="1.2.1.72"/>
    </reaction>
</comment>
<comment type="pathway">
    <text evidence="1">Cofactor biosynthesis; pyridoxine 5'-phosphate biosynthesis; pyridoxine 5'-phosphate from D-erythrose 4-phosphate: step 1/5.</text>
</comment>
<comment type="subunit">
    <text evidence="1">Homotetramer.</text>
</comment>
<comment type="subcellular location">
    <subcellularLocation>
        <location evidence="1">Cytoplasm</location>
    </subcellularLocation>
</comment>
<comment type="similarity">
    <text evidence="1">Belongs to the glyceraldehyde-3-phosphate dehydrogenase family. Epd subfamily.</text>
</comment>
<comment type="sequence caution" evidence="2">
    <conflict type="erroneous initiation">
        <sequence resource="EMBL-CDS" id="ABE54372"/>
    </conflict>
</comment>
<feature type="chain" id="PRO_0000293161" description="D-erythrose-4-phosphate dehydrogenase">
    <location>
        <begin position="1"/>
        <end position="342"/>
    </location>
</feature>
<feature type="active site" description="Nucleophile" evidence="1">
    <location>
        <position position="154"/>
    </location>
</feature>
<feature type="binding site" evidence="1">
    <location>
        <begin position="11"/>
        <end position="12"/>
    </location>
    <ligand>
        <name>NAD(+)</name>
        <dbReference type="ChEBI" id="CHEBI:57540"/>
    </ligand>
</feature>
<feature type="binding site" evidence="1">
    <location>
        <begin position="153"/>
        <end position="155"/>
    </location>
    <ligand>
        <name>substrate</name>
    </ligand>
</feature>
<feature type="binding site" evidence="1">
    <location>
        <position position="199"/>
    </location>
    <ligand>
        <name>substrate</name>
    </ligand>
</feature>
<feature type="binding site" evidence="1">
    <location>
        <begin position="212"/>
        <end position="213"/>
    </location>
    <ligand>
        <name>substrate</name>
    </ligand>
</feature>
<feature type="binding site" evidence="1">
    <location>
        <position position="235"/>
    </location>
    <ligand>
        <name>substrate</name>
    </ligand>
</feature>
<feature type="binding site" evidence="1">
    <location>
        <position position="317"/>
    </location>
    <ligand>
        <name>NAD(+)</name>
        <dbReference type="ChEBI" id="CHEBI:57540"/>
    </ligand>
</feature>
<feature type="site" description="Activates thiol group during catalysis" evidence="1">
    <location>
        <position position="181"/>
    </location>
</feature>